<name>PDUS_CITFR</name>
<evidence type="ECO:0000250" key="1">
    <source>
        <dbReference type="UniProtKB" id="Q9XDM9"/>
    </source>
</evidence>
<evidence type="ECO:0000255" key="2">
    <source>
        <dbReference type="PROSITE-ProRule" id="PRU00711"/>
    </source>
</evidence>
<evidence type="ECO:0000269" key="3">
    <source>
    </source>
</evidence>
<evidence type="ECO:0000269" key="4">
    <source>
    </source>
</evidence>
<evidence type="ECO:0000303" key="5">
    <source>
    </source>
</evidence>
<evidence type="ECO:0000303" key="6">
    <source>
    </source>
</evidence>
<evidence type="ECO:0000305" key="7"/>
<evidence type="ECO:0000305" key="8">
    <source>
    </source>
</evidence>
<proteinExistence type="evidence at protein level"/>
<gene>
    <name evidence="5" type="primary">pduS</name>
</gene>
<accession>B1VB77</accession>
<sequence length="451" mass="48569">MKTAMTAESTLYDAQTIRERVRAAGVVGAGGAGFPAHVKLQAQVDTFLVNAAECEPMLKVDQQLMAVQAERLIRGVQYAMTATGARAGIIALKEKYQRAINALTPLLPAGIRLHILPDVYPAGDEVLTIWMATGRRVPPAALPVSVGVVVNNVQTVLNITRAVEQQYPVTRRTLTVNGAVARPITLTVPIGMSLREVLALAGGATVDDPGFINGGPMMGGLITSLDTPVSKTTGGLLVLPKSHALIQRRMQDERTVLSVAKTVCEQCRLCTDLCPRHLIGHELSPHLLVRAVNYQQAATPQLLLTALTCSECNVCESVACPVGISPMRINRMLKRELRALNHRYEGPLNPEDEMAKYRLIPVKRLITKLGLSDWYHDAPLTETDYPTDKTTLLLRQHIGASAIPCVLQGEHVVRGQCVADVPSGALGAPVHASIDGIVSEITEQSITVIRG</sequence>
<protein>
    <recommendedName>
        <fullName evidence="6">Cobalamin reductase PduS</fullName>
    </recommendedName>
    <alternativeName>
        <fullName evidence="6">Corrin reductase</fullName>
    </alternativeName>
    <alternativeName>
        <fullName>Propanediol utilization protein PduS</fullName>
    </alternativeName>
</protein>
<organism>
    <name type="scientific">Citrobacter freundii</name>
    <dbReference type="NCBI Taxonomy" id="546"/>
    <lineage>
        <taxon>Bacteria</taxon>
        <taxon>Pseudomonadati</taxon>
        <taxon>Pseudomonadota</taxon>
        <taxon>Gammaproteobacteria</taxon>
        <taxon>Enterobacterales</taxon>
        <taxon>Enterobacteriaceae</taxon>
        <taxon>Citrobacter</taxon>
        <taxon>Citrobacter freundii complex</taxon>
    </lineage>
</organism>
<comment type="function">
    <text evidence="1 4">A bifunctional cobalamin reductase that converts cob(III)alamin to cob(II)alamin and then to cob(I)alamin in the bacterial microcompartment (BMC) dedicated to 1,2-propanediol (1,2-PD) degradation. PduS and PduO allow regeneration of the adenosylcobalamin cofactor within the BMC (PubMed:21103360). Cobalamin reduction probably occurs spontaneously in the presence of free reduced flavin nucleotides, this protein may be involved in electron transfer for this reduction (By similarity).</text>
</comment>
<comment type="function">
    <text evidence="7">Expression of a cosmid containing the full 21-gene pdu operon in E.coli allows E.coli to grow on 1,2-propanediol (1,2-PD) with the appearance of BMCs in its cytoplasm.</text>
</comment>
<comment type="function">
    <text evidence="8">The 1,2-PD-specific bacterial microcompartment (BMC) concentrates low levels of 1,2-PD catabolic enzymes, concentrates volatile reaction intermediates thus enhancing pathway flux and keeps the level of toxic, mutagenic propionaldehyde low.</text>
</comment>
<comment type="cofactor">
    <cofactor evidence="2 4">
        <name>[4Fe-4S] cluster</name>
        <dbReference type="ChEBI" id="CHEBI:49883"/>
    </cofactor>
    <text evidence="2 4">Binds 2 [4Fe-4S] clusters (By similarity) (PubMed:21103360). The two centers are coupled but must possess different redox potentials (PubMed:21103360).</text>
</comment>
<comment type="cofactor">
    <cofactor evidence="4">
        <name>FMN</name>
        <dbReference type="ChEBI" id="CHEBI:58210"/>
    </cofactor>
    <text evidence="1">Binds one FMN non-covalently per monomer.</text>
</comment>
<comment type="biophysicochemical properties">
    <kinetics>
        <KM evidence="4">0.59 mM for aquacob(III)alamin</KM>
        <KM evidence="4">24.7 uM for NADH</KM>
    </kinetics>
    <redoxPotential>
        <text>E(0) is -262 mV for aerobically purified protein (only with FMN). E(0) is -150 mV for anaerobically purified protein (with FMN and 4Fe-4S centers).</text>
    </redoxPotential>
</comment>
<comment type="pathway">
    <text evidence="3">Polyol metabolism; 1,2-propanediol degradation.</text>
</comment>
<comment type="subunit">
    <text evidence="1 4">Monomer, forms a complex with PduO (By similarity). Interacts with PduT, probably via the N-terminus of PduS (PubMed:21103360).</text>
</comment>
<comment type="subcellular location">
    <subcellularLocation>
        <location evidence="1">Bacterial microcompartment</location>
    </subcellularLocation>
</comment>
<comment type="similarity">
    <text evidence="7">Belongs to the PduS cobalamin reductase family.</text>
</comment>
<dbReference type="EMBL" id="AM498294">
    <property type="protein sequence ID" value="CAM57298.1"/>
    <property type="molecule type" value="Genomic_DNA"/>
</dbReference>
<dbReference type="SMR" id="B1VB77"/>
<dbReference type="UniPathway" id="UPA00621"/>
<dbReference type="GO" id="GO:0031469">
    <property type="term" value="C:bacterial microcompartment"/>
    <property type="evidence" value="ECO:0007669"/>
    <property type="project" value="UniProtKB-SubCell"/>
</dbReference>
<dbReference type="GO" id="GO:0016020">
    <property type="term" value="C:membrane"/>
    <property type="evidence" value="ECO:0007669"/>
    <property type="project" value="InterPro"/>
</dbReference>
<dbReference type="GO" id="GO:0051539">
    <property type="term" value="F:4 iron, 4 sulfur cluster binding"/>
    <property type="evidence" value="ECO:0007669"/>
    <property type="project" value="UniProtKB-KW"/>
</dbReference>
<dbReference type="GO" id="GO:0009055">
    <property type="term" value="F:electron transfer activity"/>
    <property type="evidence" value="ECO:0007669"/>
    <property type="project" value="InterPro"/>
</dbReference>
<dbReference type="GO" id="GO:0046872">
    <property type="term" value="F:metal ion binding"/>
    <property type="evidence" value="ECO:0007669"/>
    <property type="project" value="UniProtKB-KW"/>
</dbReference>
<dbReference type="GO" id="GO:0051144">
    <property type="term" value="P:propanediol catabolic process"/>
    <property type="evidence" value="ECO:0007669"/>
    <property type="project" value="UniProtKB-UniPathway"/>
</dbReference>
<dbReference type="Gene3D" id="3.10.20.600">
    <property type="match status" value="1"/>
</dbReference>
<dbReference type="Gene3D" id="1.10.1060.10">
    <property type="entry name" value="Alpha-helical ferredoxin"/>
    <property type="match status" value="1"/>
</dbReference>
<dbReference type="Gene3D" id="3.40.50.11540">
    <property type="entry name" value="NADH-ubiquinone oxidoreductase 51kDa subunit"/>
    <property type="match status" value="1"/>
</dbReference>
<dbReference type="InterPro" id="IPR017896">
    <property type="entry name" value="4Fe4S_Fe-S-bd"/>
</dbReference>
<dbReference type="InterPro" id="IPR009051">
    <property type="entry name" value="Helical_ferredxn"/>
</dbReference>
<dbReference type="InterPro" id="IPR010208">
    <property type="entry name" value="Ion_transpt_RnfC/RsxC"/>
</dbReference>
<dbReference type="InterPro" id="IPR011538">
    <property type="entry name" value="Nuo51_FMN-bd"/>
</dbReference>
<dbReference type="InterPro" id="IPR037225">
    <property type="entry name" value="Nuo51_FMN-bd_sf"/>
</dbReference>
<dbReference type="InterPro" id="IPR017054">
    <property type="entry name" value="PduS"/>
</dbReference>
<dbReference type="InterPro" id="IPR026902">
    <property type="entry name" value="RnfC_N"/>
</dbReference>
<dbReference type="InterPro" id="IPR019554">
    <property type="entry name" value="Soluble_ligand-bd"/>
</dbReference>
<dbReference type="PANTHER" id="PTHR43034">
    <property type="entry name" value="ION-TRANSLOCATING OXIDOREDUCTASE COMPLEX SUBUNIT C"/>
    <property type="match status" value="1"/>
</dbReference>
<dbReference type="PANTHER" id="PTHR43034:SF2">
    <property type="entry name" value="ION-TRANSLOCATING OXIDOREDUCTASE COMPLEX SUBUNIT C"/>
    <property type="match status" value="1"/>
</dbReference>
<dbReference type="Pfam" id="PF01512">
    <property type="entry name" value="Complex1_51K"/>
    <property type="match status" value="1"/>
</dbReference>
<dbReference type="Pfam" id="PF13534">
    <property type="entry name" value="Fer4_17"/>
    <property type="match status" value="1"/>
</dbReference>
<dbReference type="Pfam" id="PF13375">
    <property type="entry name" value="RnfC_N"/>
    <property type="match status" value="1"/>
</dbReference>
<dbReference type="Pfam" id="PF10531">
    <property type="entry name" value="SLBB"/>
    <property type="match status" value="1"/>
</dbReference>
<dbReference type="PIRSF" id="PIRSF036408">
    <property type="entry name" value="PduS_prd"/>
    <property type="match status" value="1"/>
</dbReference>
<dbReference type="SUPFAM" id="SSF46548">
    <property type="entry name" value="alpha-helical ferredoxin"/>
    <property type="match status" value="1"/>
</dbReference>
<dbReference type="SUPFAM" id="SSF142019">
    <property type="entry name" value="Nqo1 FMN-binding domain-like"/>
    <property type="match status" value="1"/>
</dbReference>
<dbReference type="SUPFAM" id="SSF142984">
    <property type="entry name" value="Nqo1 middle domain-like"/>
    <property type="match status" value="1"/>
</dbReference>
<dbReference type="PROSITE" id="PS00198">
    <property type="entry name" value="4FE4S_FER_1"/>
    <property type="match status" value="1"/>
</dbReference>
<dbReference type="PROSITE" id="PS51379">
    <property type="entry name" value="4FE4S_FER_2"/>
    <property type="match status" value="2"/>
</dbReference>
<keyword id="KW-0004">4Fe-4S</keyword>
<keyword id="KW-1283">Bacterial microcompartment</keyword>
<keyword id="KW-0249">Electron transport</keyword>
<keyword id="KW-0285">Flavoprotein</keyword>
<keyword id="KW-0288">FMN</keyword>
<keyword id="KW-0408">Iron</keyword>
<keyword id="KW-0411">Iron-sulfur</keyword>
<keyword id="KW-0479">Metal-binding</keyword>
<keyword id="KW-0520">NAD</keyword>
<keyword id="KW-0677">Repeat</keyword>
<keyword id="KW-0813">Transport</keyword>
<reference key="1">
    <citation type="journal article" date="2008" name="J. Biol. Chem.">
        <title>Biochemical and Structural Insights into Bacterial Organelle Form and Biogenesis.</title>
        <authorList>
            <person name="Parsons J.B."/>
            <person name="Dinesh S.D."/>
            <person name="Deery E."/>
            <person name="Leech H.K."/>
            <person name="Brindley A.A."/>
            <person name="Heldt D."/>
            <person name="Frank S."/>
            <person name="Smales C.M."/>
            <person name="Lunsdorf H."/>
            <person name="Rambach A."/>
            <person name="Gass M.H."/>
            <person name="Bleloch A."/>
            <person name="McClean K.J."/>
            <person name="Munro A.W."/>
            <person name="Rigby S.E.J."/>
            <person name="Warren M.J."/>
            <person name="Prentice M.B."/>
        </authorList>
    </citation>
    <scope>NUCLEOTIDE SEQUENCE [GENOMIC DNA]</scope>
    <scope>FUNCTION</scope>
    <scope>PATHWAY</scope>
</reference>
<reference key="2">
    <citation type="journal article" date="2010" name="PLoS ONE">
        <title>Characterisation of PduS, the pdu metabolosome corrin reductase, and evidence of substructural organisation within the bacterial microcompartment.</title>
        <authorList>
            <person name="Parsons J.B."/>
            <person name="Lawrence A.D."/>
            <person name="McLean K.J."/>
            <person name="Munro A.W."/>
            <person name="Rigby S.E."/>
            <person name="Warren M.J."/>
        </authorList>
    </citation>
    <scope>FUNCTION</scope>
    <scope>4FE-4S COFACTOR</scope>
    <scope>FMN COFACTOR</scope>
    <scope>BIOPHYSICOCHEMICAL PROPERTIES</scope>
    <scope>INTERACTION WITH PDUT</scope>
    <scope>MUTAGENESIS OF CYS-54; CYS-264; CYS-267; CYS-270; CYS-274; CYS-309; CYS-312; CYS-315 AND CYS-320</scope>
</reference>
<feature type="chain" id="PRO_0000454283" description="Cobalamin reductase PduS">
    <location>
        <begin position="1"/>
        <end position="451"/>
    </location>
</feature>
<feature type="domain" description="4Fe-4S ferredoxin-type 1" evidence="2">
    <location>
        <begin position="255"/>
        <end position="284"/>
    </location>
</feature>
<feature type="domain" description="4Fe-4S ferredoxin-type 2" evidence="2">
    <location>
        <begin position="300"/>
        <end position="330"/>
    </location>
</feature>
<feature type="binding site" evidence="2">
    <location>
        <position position="264"/>
    </location>
    <ligand>
        <name>[4Fe-4S] cluster</name>
        <dbReference type="ChEBI" id="CHEBI:49883"/>
        <label>1</label>
    </ligand>
</feature>
<feature type="binding site" evidence="2">
    <location>
        <position position="267"/>
    </location>
    <ligand>
        <name>[4Fe-4S] cluster</name>
        <dbReference type="ChEBI" id="CHEBI:49883"/>
        <label>1</label>
    </ligand>
</feature>
<feature type="binding site" evidence="2">
    <location>
        <position position="270"/>
    </location>
    <ligand>
        <name>[4Fe-4S] cluster</name>
        <dbReference type="ChEBI" id="CHEBI:49883"/>
        <label>1</label>
    </ligand>
</feature>
<feature type="binding site" evidence="2">
    <location>
        <position position="274"/>
    </location>
    <ligand>
        <name>[4Fe-4S] cluster</name>
        <dbReference type="ChEBI" id="CHEBI:49883"/>
        <label>1</label>
    </ligand>
</feature>
<feature type="binding site" evidence="2">
    <location>
        <position position="309"/>
    </location>
    <ligand>
        <name>[4Fe-4S] cluster</name>
        <dbReference type="ChEBI" id="CHEBI:49883"/>
        <label>2</label>
    </ligand>
</feature>
<feature type="binding site" evidence="2">
    <location>
        <position position="312"/>
    </location>
    <ligand>
        <name>[4Fe-4S] cluster</name>
        <dbReference type="ChEBI" id="CHEBI:49883"/>
        <label>2</label>
    </ligand>
</feature>
<feature type="binding site" evidence="2">
    <location>
        <position position="315"/>
    </location>
    <ligand>
        <name>[4Fe-4S] cluster</name>
        <dbReference type="ChEBI" id="CHEBI:49883"/>
        <label>2</label>
    </ligand>
</feature>
<feature type="binding site" evidence="2">
    <location>
        <position position="320"/>
    </location>
    <ligand>
        <name>[4Fe-4S] cluster</name>
        <dbReference type="ChEBI" id="CHEBI:49883"/>
        <label>2</label>
    </ligand>
</feature>
<feature type="mutagenesis site" description="Colorless protein, no 4Fe-4S centers, no cobalamin reductase activity." evidence="4">
    <original>C</original>
    <variation>A</variation>
    <location>
        <position position="54"/>
    </location>
</feature>
<feature type="mutagenesis site" description="Colorless protein, no 4Fe-4S centers, no cobalamin reductase activity." evidence="4">
    <original>C</original>
    <variation>A</variation>
    <location>
        <position position="264"/>
    </location>
</feature>
<feature type="mutagenesis site" description="Colorless protein, no 4Fe-4S centers, no cobalamin reductase activity." evidence="4">
    <original>C</original>
    <variation>A</variation>
    <location>
        <position position="267"/>
    </location>
</feature>
<feature type="mutagenesis site" description="Colorless protein, no 4Fe-4S centers, no cobalamin reductase activity." evidence="4">
    <original>C</original>
    <variation>A</variation>
    <location>
        <position position="270"/>
    </location>
</feature>
<feature type="mutagenesis site" description="Colorless protein, no 4Fe-4S centers, no cobalamin reductase activity." evidence="4">
    <original>C</original>
    <variation>A</variation>
    <location>
        <position position="274"/>
    </location>
</feature>
<feature type="mutagenesis site" description="Colorless protein, no 4Fe-4S centers, no cobalamin reductase activity." evidence="4">
    <original>C</original>
    <variation>A</variation>
    <location>
        <position position="309"/>
    </location>
</feature>
<feature type="mutagenesis site" description="Colorless protein, no 4Fe-4S centers, no cobalamin reductase activity." evidence="4">
    <original>C</original>
    <variation>A</variation>
    <location>
        <position position="312"/>
    </location>
</feature>
<feature type="mutagenesis site" description="Colorless protein, no 4Fe-4S centers, no cobalamin reductase activity." evidence="4">
    <original>C</original>
    <variation>A</variation>
    <location>
        <position position="315"/>
    </location>
</feature>
<feature type="mutagenesis site" description="Colorless protein, no 4Fe-4S centers, no cobalamin reductase activity." evidence="4">
    <original>C</original>
    <variation>A</variation>
    <location>
        <position position="320"/>
    </location>
</feature>